<sequence length="254" mass="28724">MTILPISAFSDNYIWTFIDKIAGVLDCVDPGEAGPIIRFAQSNQLTLRTILLTHHHYDHIGGVDLLIKQWPSCKVYGPIDERINNVTHPIKQGQSVQVGSLHFHILFNPGHTSTHISYYEPQQGWLFCGDTLFSAGCGRVFDGTIEELHESLLLFKKLPRNTKVFCAHEYTLQNLKFAHTVEPCNSSVINYMQQILKQPSPCTLPSNIDLELSINPFLRTDKEQVKQYALSHGANSSDSLDVFKVLRNQKNSFK</sequence>
<gene>
    <name evidence="1" type="primary">gloB</name>
    <name type="ordered locus">lpp1258</name>
</gene>
<proteinExistence type="inferred from homology"/>
<comment type="function">
    <text evidence="1">Thiolesterase that catalyzes the hydrolysis of S-D-lactoyl-glutathione to form glutathione and D-lactic acid.</text>
</comment>
<comment type="catalytic activity">
    <reaction evidence="1">
        <text>an S-(2-hydroxyacyl)glutathione + H2O = a 2-hydroxy carboxylate + glutathione + H(+)</text>
        <dbReference type="Rhea" id="RHEA:21864"/>
        <dbReference type="ChEBI" id="CHEBI:15377"/>
        <dbReference type="ChEBI" id="CHEBI:15378"/>
        <dbReference type="ChEBI" id="CHEBI:57925"/>
        <dbReference type="ChEBI" id="CHEBI:58896"/>
        <dbReference type="ChEBI" id="CHEBI:71261"/>
        <dbReference type="EC" id="3.1.2.6"/>
    </reaction>
</comment>
<comment type="cofactor">
    <cofactor evidence="1">
        <name>Zn(2+)</name>
        <dbReference type="ChEBI" id="CHEBI:29105"/>
    </cofactor>
    <text evidence="1">Binds 2 Zn(2+) ions per subunit.</text>
</comment>
<comment type="pathway">
    <text evidence="1">Secondary metabolite metabolism; methylglyoxal degradation; (R)-lactate from methylglyoxal: step 2/2.</text>
</comment>
<comment type="subunit">
    <text evidence="1">Monomer.</text>
</comment>
<comment type="similarity">
    <text evidence="1">Belongs to the metallo-beta-lactamase superfamily. Glyoxalase II family.</text>
</comment>
<organism>
    <name type="scientific">Legionella pneumophila (strain Paris)</name>
    <dbReference type="NCBI Taxonomy" id="297246"/>
    <lineage>
        <taxon>Bacteria</taxon>
        <taxon>Pseudomonadati</taxon>
        <taxon>Pseudomonadota</taxon>
        <taxon>Gammaproteobacteria</taxon>
        <taxon>Legionellales</taxon>
        <taxon>Legionellaceae</taxon>
        <taxon>Legionella</taxon>
    </lineage>
</organism>
<keyword id="KW-0378">Hydrolase</keyword>
<keyword id="KW-0479">Metal-binding</keyword>
<keyword id="KW-0862">Zinc</keyword>
<protein>
    <recommendedName>
        <fullName evidence="1">Hydroxyacylglutathione hydrolase</fullName>
        <ecNumber evidence="1">3.1.2.6</ecNumber>
    </recommendedName>
    <alternativeName>
        <fullName evidence="1">Glyoxalase II</fullName>
        <shortName evidence="1">Glx II</shortName>
    </alternativeName>
</protein>
<evidence type="ECO:0000255" key="1">
    <source>
        <dbReference type="HAMAP-Rule" id="MF_01374"/>
    </source>
</evidence>
<dbReference type="EC" id="3.1.2.6" evidence="1"/>
<dbReference type="EMBL" id="CR628336">
    <property type="protein sequence ID" value="CAH12409.1"/>
    <property type="molecule type" value="Genomic_DNA"/>
</dbReference>
<dbReference type="RefSeq" id="WP_011213607.1">
    <property type="nucleotide sequence ID" value="NC_006368.1"/>
</dbReference>
<dbReference type="SMR" id="Q5X5R2"/>
<dbReference type="KEGG" id="lpp:lpp1258"/>
<dbReference type="LegioList" id="lpp1258"/>
<dbReference type="HOGENOM" id="CLU_030571_4_1_6"/>
<dbReference type="UniPathway" id="UPA00619">
    <property type="reaction ID" value="UER00676"/>
</dbReference>
<dbReference type="GO" id="GO:0004416">
    <property type="term" value="F:hydroxyacylglutathione hydrolase activity"/>
    <property type="evidence" value="ECO:0007669"/>
    <property type="project" value="UniProtKB-UniRule"/>
</dbReference>
<dbReference type="GO" id="GO:0046872">
    <property type="term" value="F:metal ion binding"/>
    <property type="evidence" value="ECO:0007669"/>
    <property type="project" value="UniProtKB-KW"/>
</dbReference>
<dbReference type="GO" id="GO:0019243">
    <property type="term" value="P:methylglyoxal catabolic process to D-lactate via S-lactoyl-glutathione"/>
    <property type="evidence" value="ECO:0007669"/>
    <property type="project" value="InterPro"/>
</dbReference>
<dbReference type="CDD" id="cd07723">
    <property type="entry name" value="hydroxyacylglutathione_hydrolase_MBL-fold"/>
    <property type="match status" value="1"/>
</dbReference>
<dbReference type="Gene3D" id="3.60.15.10">
    <property type="entry name" value="Ribonuclease Z/Hydroxyacylglutathione hydrolase-like"/>
    <property type="match status" value="1"/>
</dbReference>
<dbReference type="HAMAP" id="MF_01374">
    <property type="entry name" value="Glyoxalase_2"/>
    <property type="match status" value="1"/>
</dbReference>
<dbReference type="InterPro" id="IPR035680">
    <property type="entry name" value="Clx_II_MBL"/>
</dbReference>
<dbReference type="InterPro" id="IPR050110">
    <property type="entry name" value="Glyoxalase_II_hydrolase"/>
</dbReference>
<dbReference type="InterPro" id="IPR032282">
    <property type="entry name" value="HAGH_C"/>
</dbReference>
<dbReference type="InterPro" id="IPR017782">
    <property type="entry name" value="Hydroxyacylglutathione_Hdrlase"/>
</dbReference>
<dbReference type="InterPro" id="IPR001279">
    <property type="entry name" value="Metallo-B-lactamas"/>
</dbReference>
<dbReference type="InterPro" id="IPR036866">
    <property type="entry name" value="RibonucZ/Hydroxyglut_hydro"/>
</dbReference>
<dbReference type="NCBIfam" id="TIGR03413">
    <property type="entry name" value="GSH_gloB"/>
    <property type="match status" value="1"/>
</dbReference>
<dbReference type="PANTHER" id="PTHR43705">
    <property type="entry name" value="HYDROXYACYLGLUTATHIONE HYDROLASE"/>
    <property type="match status" value="1"/>
</dbReference>
<dbReference type="PANTHER" id="PTHR43705:SF1">
    <property type="entry name" value="HYDROXYACYLGLUTATHIONE HYDROLASE GLOB"/>
    <property type="match status" value="1"/>
</dbReference>
<dbReference type="Pfam" id="PF16123">
    <property type="entry name" value="HAGH_C"/>
    <property type="match status" value="1"/>
</dbReference>
<dbReference type="Pfam" id="PF00753">
    <property type="entry name" value="Lactamase_B"/>
    <property type="match status" value="1"/>
</dbReference>
<dbReference type="PIRSF" id="PIRSF005457">
    <property type="entry name" value="Glx"/>
    <property type="match status" value="1"/>
</dbReference>
<dbReference type="SMART" id="SM00849">
    <property type="entry name" value="Lactamase_B"/>
    <property type="match status" value="1"/>
</dbReference>
<dbReference type="SUPFAM" id="SSF56281">
    <property type="entry name" value="Metallo-hydrolase/oxidoreductase"/>
    <property type="match status" value="1"/>
</dbReference>
<reference key="1">
    <citation type="journal article" date="2004" name="Nat. Genet.">
        <title>Evidence in the Legionella pneumophila genome for exploitation of host cell functions and high genome plasticity.</title>
        <authorList>
            <person name="Cazalet C."/>
            <person name="Rusniok C."/>
            <person name="Brueggemann H."/>
            <person name="Zidane N."/>
            <person name="Magnier A."/>
            <person name="Ma L."/>
            <person name="Tichit M."/>
            <person name="Jarraud S."/>
            <person name="Bouchier C."/>
            <person name="Vandenesch F."/>
            <person name="Kunst F."/>
            <person name="Etienne J."/>
            <person name="Glaser P."/>
            <person name="Buchrieser C."/>
        </authorList>
    </citation>
    <scope>NUCLEOTIDE SEQUENCE [LARGE SCALE GENOMIC DNA]</scope>
    <source>
        <strain>Paris</strain>
    </source>
</reference>
<name>GLO2_LEGPA</name>
<feature type="chain" id="PRO_0000309654" description="Hydroxyacylglutathione hydrolase">
    <location>
        <begin position="1"/>
        <end position="254"/>
    </location>
</feature>
<feature type="binding site" evidence="1">
    <location>
        <position position="54"/>
    </location>
    <ligand>
        <name>Zn(2+)</name>
        <dbReference type="ChEBI" id="CHEBI:29105"/>
        <label>1</label>
    </ligand>
</feature>
<feature type="binding site" evidence="1">
    <location>
        <position position="56"/>
    </location>
    <ligand>
        <name>Zn(2+)</name>
        <dbReference type="ChEBI" id="CHEBI:29105"/>
        <label>1</label>
    </ligand>
</feature>
<feature type="binding site" evidence="1">
    <location>
        <position position="58"/>
    </location>
    <ligand>
        <name>Zn(2+)</name>
        <dbReference type="ChEBI" id="CHEBI:29105"/>
        <label>2</label>
    </ligand>
</feature>
<feature type="binding site" evidence="1">
    <location>
        <position position="59"/>
    </location>
    <ligand>
        <name>Zn(2+)</name>
        <dbReference type="ChEBI" id="CHEBI:29105"/>
        <label>2</label>
    </ligand>
</feature>
<feature type="binding site" evidence="1">
    <location>
        <position position="111"/>
    </location>
    <ligand>
        <name>Zn(2+)</name>
        <dbReference type="ChEBI" id="CHEBI:29105"/>
        <label>1</label>
    </ligand>
</feature>
<feature type="binding site" evidence="1">
    <location>
        <position position="130"/>
    </location>
    <ligand>
        <name>Zn(2+)</name>
        <dbReference type="ChEBI" id="CHEBI:29105"/>
        <label>1</label>
    </ligand>
</feature>
<feature type="binding site" evidence="1">
    <location>
        <position position="130"/>
    </location>
    <ligand>
        <name>Zn(2+)</name>
        <dbReference type="ChEBI" id="CHEBI:29105"/>
        <label>2</label>
    </ligand>
</feature>
<feature type="binding site" evidence="1">
    <location>
        <position position="168"/>
    </location>
    <ligand>
        <name>Zn(2+)</name>
        <dbReference type="ChEBI" id="CHEBI:29105"/>
        <label>2</label>
    </ligand>
</feature>
<accession>Q5X5R2</accession>